<feature type="chain" id="PRO_1000002883" description="UDP-N-acetylenolpyruvoylglucosamine reductase">
    <location>
        <begin position="1"/>
        <end position="304"/>
    </location>
</feature>
<feature type="domain" description="FAD-binding PCMH-type" evidence="1">
    <location>
        <begin position="33"/>
        <end position="198"/>
    </location>
</feature>
<feature type="active site" evidence="1">
    <location>
        <position position="177"/>
    </location>
</feature>
<feature type="active site" description="Proton donor" evidence="1">
    <location>
        <position position="227"/>
    </location>
</feature>
<feature type="active site" evidence="1">
    <location>
        <position position="297"/>
    </location>
</feature>
<gene>
    <name evidence="1" type="primary">murB</name>
    <name type="ordered locus">CPF_0342</name>
</gene>
<proteinExistence type="inferred from homology"/>
<evidence type="ECO:0000255" key="1">
    <source>
        <dbReference type="HAMAP-Rule" id="MF_00037"/>
    </source>
</evidence>
<organism>
    <name type="scientific">Clostridium perfringens (strain ATCC 13124 / DSM 756 / JCM 1290 / NCIMB 6125 / NCTC 8237 / Type A)</name>
    <dbReference type="NCBI Taxonomy" id="195103"/>
    <lineage>
        <taxon>Bacteria</taxon>
        <taxon>Bacillati</taxon>
        <taxon>Bacillota</taxon>
        <taxon>Clostridia</taxon>
        <taxon>Eubacteriales</taxon>
        <taxon>Clostridiaceae</taxon>
        <taxon>Clostridium</taxon>
    </lineage>
</organism>
<name>MURB_CLOP1</name>
<accession>Q0TU88</accession>
<protein>
    <recommendedName>
        <fullName evidence="1">UDP-N-acetylenolpyruvoylglucosamine reductase</fullName>
        <ecNumber evidence="1">1.3.1.98</ecNumber>
    </recommendedName>
    <alternativeName>
        <fullName evidence="1">UDP-N-acetylmuramate dehydrogenase</fullName>
    </alternativeName>
</protein>
<keyword id="KW-0131">Cell cycle</keyword>
<keyword id="KW-0132">Cell division</keyword>
<keyword id="KW-0133">Cell shape</keyword>
<keyword id="KW-0961">Cell wall biogenesis/degradation</keyword>
<keyword id="KW-0963">Cytoplasm</keyword>
<keyword id="KW-0274">FAD</keyword>
<keyword id="KW-0285">Flavoprotein</keyword>
<keyword id="KW-0521">NADP</keyword>
<keyword id="KW-0560">Oxidoreductase</keyword>
<keyword id="KW-0573">Peptidoglycan synthesis</keyword>
<comment type="function">
    <text evidence="1">Cell wall formation.</text>
</comment>
<comment type="catalytic activity">
    <reaction evidence="1">
        <text>UDP-N-acetyl-alpha-D-muramate + NADP(+) = UDP-N-acetyl-3-O-(1-carboxyvinyl)-alpha-D-glucosamine + NADPH + H(+)</text>
        <dbReference type="Rhea" id="RHEA:12248"/>
        <dbReference type="ChEBI" id="CHEBI:15378"/>
        <dbReference type="ChEBI" id="CHEBI:57783"/>
        <dbReference type="ChEBI" id="CHEBI:58349"/>
        <dbReference type="ChEBI" id="CHEBI:68483"/>
        <dbReference type="ChEBI" id="CHEBI:70757"/>
        <dbReference type="EC" id="1.3.1.98"/>
    </reaction>
</comment>
<comment type="cofactor">
    <cofactor evidence="1">
        <name>FAD</name>
        <dbReference type="ChEBI" id="CHEBI:57692"/>
    </cofactor>
</comment>
<comment type="pathway">
    <text evidence="1">Cell wall biogenesis; peptidoglycan biosynthesis.</text>
</comment>
<comment type="subcellular location">
    <subcellularLocation>
        <location evidence="1">Cytoplasm</location>
    </subcellularLocation>
</comment>
<comment type="similarity">
    <text evidence="1">Belongs to the MurB family.</text>
</comment>
<reference key="1">
    <citation type="journal article" date="2006" name="Genome Res.">
        <title>Skewed genomic variability in strains of the toxigenic bacterial pathogen, Clostridium perfringens.</title>
        <authorList>
            <person name="Myers G.S.A."/>
            <person name="Rasko D.A."/>
            <person name="Cheung J.K."/>
            <person name="Ravel J."/>
            <person name="Seshadri R."/>
            <person name="DeBoy R.T."/>
            <person name="Ren Q."/>
            <person name="Varga J."/>
            <person name="Awad M.M."/>
            <person name="Brinkac L.M."/>
            <person name="Daugherty S.C."/>
            <person name="Haft D.H."/>
            <person name="Dodson R.J."/>
            <person name="Madupu R."/>
            <person name="Nelson W.C."/>
            <person name="Rosovitz M.J."/>
            <person name="Sullivan S.A."/>
            <person name="Khouri H."/>
            <person name="Dimitrov G.I."/>
            <person name="Watkins K.L."/>
            <person name="Mulligan S."/>
            <person name="Benton J."/>
            <person name="Radune D."/>
            <person name="Fisher D.J."/>
            <person name="Atkins H.S."/>
            <person name="Hiscox T."/>
            <person name="Jost B.H."/>
            <person name="Billington S.J."/>
            <person name="Songer J.G."/>
            <person name="McClane B.A."/>
            <person name="Titball R.W."/>
            <person name="Rood J.I."/>
            <person name="Melville S.B."/>
            <person name="Paulsen I.T."/>
        </authorList>
    </citation>
    <scope>NUCLEOTIDE SEQUENCE [LARGE SCALE GENOMIC DNA]</scope>
    <source>
        <strain>ATCC 13124 / DSM 756 / JCM 1290 / NCIMB 6125 / NCTC 8237 / S 107 / Type A</strain>
    </source>
</reference>
<sequence length="304" mass="33267">MNQYMEFYKLLGEFYNEEDITVDSPMSEHIYFRVGGPADILVTPVNEEQVVNTLKLCREYNVPYFILGNGSNILVKDGGISGVVIKFNKLNKITTEGNCVTAQSGALLKDVSKAALENNLRGFEFACGIPGSIGGAVFMNAGAYDGEMAHVIKSARVIDENCNIKNLTKEELELGYRSSIVMKKGYVVIEATVELESGEYASIKDKIDDLTNRRESKQPLEYPSAGSTFKRPEGYFAGKLIQDSGLKGFSIGGAAVSEKHSGFVINKGGATAKDVLDVIAHVQKTVKENFDVELHTEVRIIGRD</sequence>
<dbReference type="EC" id="1.3.1.98" evidence="1"/>
<dbReference type="EMBL" id="CP000246">
    <property type="protein sequence ID" value="ABG82218.1"/>
    <property type="molecule type" value="Genomic_DNA"/>
</dbReference>
<dbReference type="RefSeq" id="WP_003457971.1">
    <property type="nucleotide sequence ID" value="NC_008261.1"/>
</dbReference>
<dbReference type="SMR" id="Q0TU88"/>
<dbReference type="STRING" id="195103.CPF_0342"/>
<dbReference type="PaxDb" id="195103-CPF_0342"/>
<dbReference type="GeneID" id="93003312"/>
<dbReference type="KEGG" id="cpf:CPF_0342"/>
<dbReference type="eggNOG" id="COG0812">
    <property type="taxonomic scope" value="Bacteria"/>
</dbReference>
<dbReference type="HOGENOM" id="CLU_035304_1_1_9"/>
<dbReference type="UniPathway" id="UPA00219"/>
<dbReference type="Proteomes" id="UP000001823">
    <property type="component" value="Chromosome"/>
</dbReference>
<dbReference type="GO" id="GO:0005829">
    <property type="term" value="C:cytosol"/>
    <property type="evidence" value="ECO:0007669"/>
    <property type="project" value="TreeGrafter"/>
</dbReference>
<dbReference type="GO" id="GO:0071949">
    <property type="term" value="F:FAD binding"/>
    <property type="evidence" value="ECO:0007669"/>
    <property type="project" value="InterPro"/>
</dbReference>
<dbReference type="GO" id="GO:0008762">
    <property type="term" value="F:UDP-N-acetylmuramate dehydrogenase activity"/>
    <property type="evidence" value="ECO:0007669"/>
    <property type="project" value="UniProtKB-UniRule"/>
</dbReference>
<dbReference type="GO" id="GO:0051301">
    <property type="term" value="P:cell division"/>
    <property type="evidence" value="ECO:0007669"/>
    <property type="project" value="UniProtKB-KW"/>
</dbReference>
<dbReference type="GO" id="GO:0071555">
    <property type="term" value="P:cell wall organization"/>
    <property type="evidence" value="ECO:0007669"/>
    <property type="project" value="UniProtKB-KW"/>
</dbReference>
<dbReference type="GO" id="GO:0009252">
    <property type="term" value="P:peptidoglycan biosynthetic process"/>
    <property type="evidence" value="ECO:0007669"/>
    <property type="project" value="UniProtKB-UniRule"/>
</dbReference>
<dbReference type="GO" id="GO:0008360">
    <property type="term" value="P:regulation of cell shape"/>
    <property type="evidence" value="ECO:0007669"/>
    <property type="project" value="UniProtKB-KW"/>
</dbReference>
<dbReference type="Gene3D" id="3.30.465.10">
    <property type="match status" value="1"/>
</dbReference>
<dbReference type="Gene3D" id="3.90.78.10">
    <property type="entry name" value="UDP-N-acetylenolpyruvoylglucosamine reductase, C-terminal domain"/>
    <property type="match status" value="1"/>
</dbReference>
<dbReference type="Gene3D" id="3.30.43.10">
    <property type="entry name" value="Uridine Diphospho-n-acetylenolpyruvylglucosamine Reductase, domain 2"/>
    <property type="match status" value="1"/>
</dbReference>
<dbReference type="HAMAP" id="MF_00037">
    <property type="entry name" value="MurB"/>
    <property type="match status" value="1"/>
</dbReference>
<dbReference type="InterPro" id="IPR016166">
    <property type="entry name" value="FAD-bd_PCMH"/>
</dbReference>
<dbReference type="InterPro" id="IPR036318">
    <property type="entry name" value="FAD-bd_PCMH-like_sf"/>
</dbReference>
<dbReference type="InterPro" id="IPR016167">
    <property type="entry name" value="FAD-bd_PCMH_sub1"/>
</dbReference>
<dbReference type="InterPro" id="IPR016169">
    <property type="entry name" value="FAD-bd_PCMH_sub2"/>
</dbReference>
<dbReference type="InterPro" id="IPR003170">
    <property type="entry name" value="MurB"/>
</dbReference>
<dbReference type="InterPro" id="IPR011601">
    <property type="entry name" value="MurB_C"/>
</dbReference>
<dbReference type="InterPro" id="IPR036635">
    <property type="entry name" value="MurB_C_sf"/>
</dbReference>
<dbReference type="InterPro" id="IPR006094">
    <property type="entry name" value="Oxid_FAD_bind_N"/>
</dbReference>
<dbReference type="NCBIfam" id="TIGR00179">
    <property type="entry name" value="murB"/>
    <property type="match status" value="1"/>
</dbReference>
<dbReference type="NCBIfam" id="NF010480">
    <property type="entry name" value="PRK13905.1"/>
    <property type="match status" value="1"/>
</dbReference>
<dbReference type="PANTHER" id="PTHR21071">
    <property type="entry name" value="UDP-N-ACETYLENOLPYRUVOYLGLUCOSAMINE REDUCTASE"/>
    <property type="match status" value="1"/>
</dbReference>
<dbReference type="PANTHER" id="PTHR21071:SF4">
    <property type="entry name" value="UDP-N-ACETYLENOLPYRUVOYLGLUCOSAMINE REDUCTASE"/>
    <property type="match status" value="1"/>
</dbReference>
<dbReference type="Pfam" id="PF01565">
    <property type="entry name" value="FAD_binding_4"/>
    <property type="match status" value="1"/>
</dbReference>
<dbReference type="Pfam" id="PF02873">
    <property type="entry name" value="MurB_C"/>
    <property type="match status" value="1"/>
</dbReference>
<dbReference type="SUPFAM" id="SSF56176">
    <property type="entry name" value="FAD-binding/transporter-associated domain-like"/>
    <property type="match status" value="1"/>
</dbReference>
<dbReference type="SUPFAM" id="SSF56194">
    <property type="entry name" value="Uridine diphospho-N-Acetylenolpyruvylglucosamine reductase, MurB, C-terminal domain"/>
    <property type="match status" value="1"/>
</dbReference>
<dbReference type="PROSITE" id="PS51387">
    <property type="entry name" value="FAD_PCMH"/>
    <property type="match status" value="1"/>
</dbReference>